<dbReference type="EC" id="3.6.4.12"/>
<dbReference type="EMBL" id="AE017352">
    <property type="protein sequence ID" value="AAW46488.2"/>
    <property type="molecule type" value="Genomic_DNA"/>
</dbReference>
<dbReference type="RefSeq" id="XP_568005.1">
    <property type="nucleotide sequence ID" value="XM_568005.1"/>
</dbReference>
<dbReference type="SMR" id="P0CO18"/>
<dbReference type="FunCoup" id="P0CO18">
    <property type="interactions" value="429"/>
</dbReference>
<dbReference type="STRING" id="214684.P0CO18"/>
<dbReference type="PaxDb" id="214684-P0CO18"/>
<dbReference type="EnsemblFungi" id="AAW46488">
    <property type="protein sequence ID" value="AAW46488"/>
    <property type="gene ID" value="CNL04590"/>
</dbReference>
<dbReference type="eggNOG" id="KOG0391">
    <property type="taxonomic scope" value="Eukaryota"/>
</dbReference>
<dbReference type="HOGENOM" id="CLU_000315_24_1_1"/>
<dbReference type="InParanoid" id="P0CO18"/>
<dbReference type="Proteomes" id="UP000002149">
    <property type="component" value="Chromosome 12"/>
</dbReference>
<dbReference type="GO" id="GO:0000812">
    <property type="term" value="C:Swr1 complex"/>
    <property type="evidence" value="ECO:0000318"/>
    <property type="project" value="GO_Central"/>
</dbReference>
<dbReference type="GO" id="GO:0005524">
    <property type="term" value="F:ATP binding"/>
    <property type="evidence" value="ECO:0007669"/>
    <property type="project" value="UniProtKB-KW"/>
</dbReference>
<dbReference type="GO" id="GO:0016887">
    <property type="term" value="F:ATP hydrolysis activity"/>
    <property type="evidence" value="ECO:0000318"/>
    <property type="project" value="GO_Central"/>
</dbReference>
<dbReference type="GO" id="GO:0003677">
    <property type="term" value="F:DNA binding"/>
    <property type="evidence" value="ECO:0007669"/>
    <property type="project" value="UniProtKB-KW"/>
</dbReference>
<dbReference type="GO" id="GO:0004386">
    <property type="term" value="F:helicase activity"/>
    <property type="evidence" value="ECO:0007669"/>
    <property type="project" value="UniProtKB-KW"/>
</dbReference>
<dbReference type="GO" id="GO:0042393">
    <property type="term" value="F:histone binding"/>
    <property type="evidence" value="ECO:0000318"/>
    <property type="project" value="GO_Central"/>
</dbReference>
<dbReference type="GO" id="GO:0006338">
    <property type="term" value="P:chromatin remodeling"/>
    <property type="evidence" value="ECO:0000318"/>
    <property type="project" value="GO_Central"/>
</dbReference>
<dbReference type="CDD" id="cd18003">
    <property type="entry name" value="DEXQc_SRCAP"/>
    <property type="match status" value="1"/>
</dbReference>
<dbReference type="CDD" id="cd18793">
    <property type="entry name" value="SF2_C_SNF"/>
    <property type="match status" value="1"/>
</dbReference>
<dbReference type="FunFam" id="3.40.50.10810:FF:000051">
    <property type="entry name" value="Helicase SWR1"/>
    <property type="match status" value="1"/>
</dbReference>
<dbReference type="Gene3D" id="3.40.50.300">
    <property type="entry name" value="P-loop containing nucleotide triphosphate hydrolases"/>
    <property type="match status" value="1"/>
</dbReference>
<dbReference type="Gene3D" id="1.20.120.850">
    <property type="entry name" value="SWI2/SNF2 ATPases, N-terminal domain"/>
    <property type="match status" value="1"/>
</dbReference>
<dbReference type="Gene3D" id="3.40.50.10810">
    <property type="entry name" value="Tandem AAA-ATPase domain"/>
    <property type="match status" value="1"/>
</dbReference>
<dbReference type="InterPro" id="IPR014001">
    <property type="entry name" value="Helicase_ATP-bd"/>
</dbReference>
<dbReference type="InterPro" id="IPR001650">
    <property type="entry name" value="Helicase_C-like"/>
</dbReference>
<dbReference type="InterPro" id="IPR014012">
    <property type="entry name" value="HSA_dom"/>
</dbReference>
<dbReference type="InterPro" id="IPR050520">
    <property type="entry name" value="INO80/SWR1_helicase"/>
</dbReference>
<dbReference type="InterPro" id="IPR027417">
    <property type="entry name" value="P-loop_NTPase"/>
</dbReference>
<dbReference type="InterPro" id="IPR038718">
    <property type="entry name" value="SNF2-like_sf"/>
</dbReference>
<dbReference type="InterPro" id="IPR049730">
    <property type="entry name" value="SNF2/RAD54-like_C"/>
</dbReference>
<dbReference type="InterPro" id="IPR000330">
    <property type="entry name" value="SNF2_N"/>
</dbReference>
<dbReference type="PANTHER" id="PTHR45685:SF1">
    <property type="entry name" value="HELICASE SRCAP"/>
    <property type="match status" value="1"/>
</dbReference>
<dbReference type="PANTHER" id="PTHR45685">
    <property type="entry name" value="HELICASE SRCAP-RELATED"/>
    <property type="match status" value="1"/>
</dbReference>
<dbReference type="Pfam" id="PF00271">
    <property type="entry name" value="Helicase_C"/>
    <property type="match status" value="1"/>
</dbReference>
<dbReference type="Pfam" id="PF07529">
    <property type="entry name" value="HSA"/>
    <property type="match status" value="1"/>
</dbReference>
<dbReference type="Pfam" id="PF00176">
    <property type="entry name" value="SNF2-rel_dom"/>
    <property type="match status" value="1"/>
</dbReference>
<dbReference type="SMART" id="SM00487">
    <property type="entry name" value="DEXDc"/>
    <property type="match status" value="1"/>
</dbReference>
<dbReference type="SMART" id="SM00490">
    <property type="entry name" value="HELICc"/>
    <property type="match status" value="1"/>
</dbReference>
<dbReference type="SUPFAM" id="SSF52540">
    <property type="entry name" value="P-loop containing nucleoside triphosphate hydrolases"/>
    <property type="match status" value="2"/>
</dbReference>
<dbReference type="PROSITE" id="PS51192">
    <property type="entry name" value="HELICASE_ATP_BIND_1"/>
    <property type="match status" value="1"/>
</dbReference>
<dbReference type="PROSITE" id="PS51194">
    <property type="entry name" value="HELICASE_CTER"/>
    <property type="match status" value="1"/>
</dbReference>
<dbReference type="PROSITE" id="PS51204">
    <property type="entry name" value="HSA"/>
    <property type="match status" value="1"/>
</dbReference>
<name>SWR1_CRYNJ</name>
<organism>
    <name type="scientific">Cryptococcus neoformans var. neoformans serotype D (strain JEC21 / ATCC MYA-565)</name>
    <name type="common">Filobasidiella neoformans</name>
    <dbReference type="NCBI Taxonomy" id="214684"/>
    <lineage>
        <taxon>Eukaryota</taxon>
        <taxon>Fungi</taxon>
        <taxon>Dikarya</taxon>
        <taxon>Basidiomycota</taxon>
        <taxon>Agaricomycotina</taxon>
        <taxon>Tremellomycetes</taxon>
        <taxon>Tremellales</taxon>
        <taxon>Cryptococcaceae</taxon>
        <taxon>Cryptococcus</taxon>
        <taxon>Cryptococcus neoformans species complex</taxon>
    </lineage>
</organism>
<protein>
    <recommendedName>
        <fullName>Helicase SWR1</fullName>
        <ecNumber>3.6.4.12</ecNumber>
    </recommendedName>
</protein>
<evidence type="ECO:0000250" key="1"/>
<evidence type="ECO:0000255" key="2">
    <source>
        <dbReference type="PROSITE-ProRule" id="PRU00541"/>
    </source>
</evidence>
<evidence type="ECO:0000255" key="3">
    <source>
        <dbReference type="PROSITE-ProRule" id="PRU00542"/>
    </source>
</evidence>
<evidence type="ECO:0000255" key="4">
    <source>
        <dbReference type="PROSITE-ProRule" id="PRU00549"/>
    </source>
</evidence>
<evidence type="ECO:0000256" key="5">
    <source>
        <dbReference type="SAM" id="MobiDB-lite"/>
    </source>
</evidence>
<evidence type="ECO:0000305" key="6"/>
<sequence>MSNESSQLAASSRLPTTTNQVKTVITDTPFVSTALEERRSRSLRARPSLSSPSMGIPSTTHPNGHATQSKGMEAISQGLRQEAVIVRREKRITEKERELKEVVESHDGLIREKFHLERFVTLLEGWNPEQAKLDNSPVFLQWKDSKHNLLNLLPDEPAISASSQAGPSRPRSSLPSRTTRRKAHEQSELLAHVVAPVAKPPAFAPSTKGKERVGDELHAKTKGKGKGLAEQSLIPSPAEGALHTKGGKRKVGDVTTDMLPPPVPDKRSRGSRRATMGAPLPQIDQNEEVGLDSQATHGGKAKRRGRISLPDLPTSKKLRTAKRASAVSSESASPVVEAPTLERLASPSPLSTPVPLPTFAHLPFPPAPHRIRKRIVGPRTIRYTDPSQRPPAPKYGGDITPIIESYVNINDTGPPPEMKTLEARAKKEGYLLARVMYLKSHGRLQRLVDEEDGSNLFSTTTTSNSHAKIIRIPPRKTDYHDTLIAHMVQVRNAMLNVAKSKPVTCKKVARMVQAYWENIEGKEERERLAEEKERRRMGKEIIKSLRKRWALAVKVVRAKILEAQKQEQDRLGKEHLQNILQRSTGLLEAQIQGSNDSGEEEGEDSTSDNTDDSEGDDETNTLLPLTSISPEPVIGDDEEDVDVHDDDDEQQGEEDTSHKEDESDASDTESDENSMSEHNQDLRFLISDDVLNEDPMSTGRFAEEDRGSSDTEQLTDNKNDGEEPKETAVQAAFDGSDDVNRLEEPHNPVSSTANIGNFALLESSSAEVSDASCPATMPILVRQSPKTCSQPRTRKVKLSTLSLSSDPDPDINDPEFKARLEDSNQDDQDEELDLEMEEADSAGRESGEGNRDSEDEGLLADADLPIEVLLRRYGYPVPEGEGAVNGEPEQSESKGREQAAPTSTVSETLPSTKLSLAQPANQTDQSLTDTALPEPRVPEQLIISGKRQRRKKEIWTPDDSEPQHLVGKKRIKKVEIVEKVEADVHQNGDGLVIVEEETMGDEDNDDSKVGQEEEDGHEYDSEEEYDEDEDEEEEGAKEDNVDWDDRQDKEGDIGPRVRQPFLLRGTLRPYQQAGLEWLASLWSNNMNGILADEMGLGKTIQTIALLGHLACDKGVWGQHLIIVPTSVILNWEMEFKKFLPGMKVLTYYGNQKERKEKRVGWHTENTWQVCITSYQIVLADQHIFRRKNWCYMILDEAHNIKNFRSQRWQTLLGFKAQRRLLLTGTPLQNNLMELWSLLYFLMPGGIGADATAVVGFANHKEFMEWFSNPMDKAIETGDAMDEETLETVAKLHTLLRPFILRRLKSEVETQLPGKFEHVVYCRLSKRQRFLYDEFMSRASTHEALTTGGYLGVMNTLMQLRKVCNHPDLFEMRPVKTSFAMDNVARDFEPSDILIRKRLLAEEDERRIDALAIGFGVAHNEAMSGWVARARQTYDASDKLPYAASPLRRGKLSAPPPKDTRSVELWLKYRVWAEEEFSKRRWESIRATNRQRCGISPIYGSTFLSLLGNLPNFLLPQDVQSRREETFADFTPPAAKFITSLPERAKSLEDVIDRFAVIPPNAVARNLATYALPGLEPISHPALTDPAFDTLHRSSVKLQIAFPDASLLQYDCGKLQKLFEMLRDLKSEGHRVLIFTQMTRVLDILEMFLSHNGHRYLRLDGSTKIEDRQVLTERFNSDSRIFVFIASSRSGGVGINLTGADTVFFYDSDWNPSMDRQCMDRAHRIGQTREVHIYRFVSSHTVEENMLRKAEQKRLLDKMVIQEGGFNNDWWGRVGWKDMFGDVPGITDVSGVVEKSGEGIIDIQVEGTPVAEDVEVTRPRAGEERELARALAEVEDEEDAQAARMAQGEGELDLQEFEEGPKAVAKRVRVFEPENSGTPVTTEAGETGDVVEEYDDEPGSVEEYMLKWVEEDWDYFSPYRA</sequence>
<reference key="1">
    <citation type="journal article" date="2005" name="Science">
        <title>The genome of the basidiomycetous yeast and human pathogen Cryptococcus neoformans.</title>
        <authorList>
            <person name="Loftus B.J."/>
            <person name="Fung E."/>
            <person name="Roncaglia P."/>
            <person name="Rowley D."/>
            <person name="Amedeo P."/>
            <person name="Bruno D."/>
            <person name="Vamathevan J."/>
            <person name="Miranda M."/>
            <person name="Anderson I.J."/>
            <person name="Fraser J.A."/>
            <person name="Allen J.E."/>
            <person name="Bosdet I.E."/>
            <person name="Brent M.R."/>
            <person name="Chiu R."/>
            <person name="Doering T.L."/>
            <person name="Donlin M.J."/>
            <person name="D'Souza C.A."/>
            <person name="Fox D.S."/>
            <person name="Grinberg V."/>
            <person name="Fu J."/>
            <person name="Fukushima M."/>
            <person name="Haas B.J."/>
            <person name="Huang J.C."/>
            <person name="Janbon G."/>
            <person name="Jones S.J.M."/>
            <person name="Koo H.L."/>
            <person name="Krzywinski M.I."/>
            <person name="Kwon-Chung K.J."/>
            <person name="Lengeler K.B."/>
            <person name="Maiti R."/>
            <person name="Marra M.A."/>
            <person name="Marra R.E."/>
            <person name="Mathewson C.A."/>
            <person name="Mitchell T.G."/>
            <person name="Pertea M."/>
            <person name="Riggs F.R."/>
            <person name="Salzberg S.L."/>
            <person name="Schein J.E."/>
            <person name="Shvartsbeyn A."/>
            <person name="Shin H."/>
            <person name="Shumway M."/>
            <person name="Specht C.A."/>
            <person name="Suh B.B."/>
            <person name="Tenney A."/>
            <person name="Utterback T.R."/>
            <person name="Wickes B.L."/>
            <person name="Wortman J.R."/>
            <person name="Wye N.H."/>
            <person name="Kronstad J.W."/>
            <person name="Lodge J.K."/>
            <person name="Heitman J."/>
            <person name="Davis R.W."/>
            <person name="Fraser C.M."/>
            <person name="Hyman R.W."/>
        </authorList>
    </citation>
    <scope>NUCLEOTIDE SEQUENCE [LARGE SCALE GENOMIC DNA]</scope>
    <source>
        <strain>JEC21 / ATCC MYA-565</strain>
    </source>
</reference>
<gene>
    <name type="primary">SWR1</name>
    <name type="ordered locus">CNL04590</name>
</gene>
<feature type="chain" id="PRO_0000074366" description="Helicase SWR1">
    <location>
        <begin position="1"/>
        <end position="1920"/>
    </location>
</feature>
<feature type="domain" description="HSA" evidence="4">
    <location>
        <begin position="467"/>
        <end position="540"/>
    </location>
</feature>
<feature type="domain" description="Helicase ATP-binding" evidence="2">
    <location>
        <begin position="1079"/>
        <end position="1244"/>
    </location>
</feature>
<feature type="domain" description="Helicase C-terminal" evidence="3">
    <location>
        <begin position="1613"/>
        <end position="1766"/>
    </location>
</feature>
<feature type="region of interest" description="Disordered" evidence="5">
    <location>
        <begin position="1"/>
        <end position="68"/>
    </location>
</feature>
<feature type="region of interest" description="Disordered" evidence="5">
    <location>
        <begin position="158"/>
        <end position="350"/>
    </location>
</feature>
<feature type="region of interest" description="Disordered" evidence="5">
    <location>
        <begin position="590"/>
        <end position="727"/>
    </location>
</feature>
<feature type="region of interest" description="Disordered" evidence="5">
    <location>
        <begin position="783"/>
        <end position="862"/>
    </location>
</feature>
<feature type="region of interest" description="Disordered" evidence="5">
    <location>
        <begin position="876"/>
        <end position="966"/>
    </location>
</feature>
<feature type="region of interest" description="Disordered" evidence="5">
    <location>
        <begin position="988"/>
        <end position="1055"/>
    </location>
</feature>
<feature type="short sequence motif" description="DEAH box">
    <location>
        <begin position="1195"/>
        <end position="1198"/>
    </location>
</feature>
<feature type="compositionally biased region" description="Polar residues" evidence="5">
    <location>
        <begin position="1"/>
        <end position="31"/>
    </location>
</feature>
<feature type="compositionally biased region" description="Polar residues" evidence="5">
    <location>
        <begin position="56"/>
        <end position="68"/>
    </location>
</feature>
<feature type="compositionally biased region" description="Low complexity" evidence="5">
    <location>
        <begin position="167"/>
        <end position="177"/>
    </location>
</feature>
<feature type="compositionally biased region" description="Basic and acidic residues" evidence="5">
    <location>
        <begin position="208"/>
        <end position="219"/>
    </location>
</feature>
<feature type="compositionally biased region" description="Low complexity" evidence="5">
    <location>
        <begin position="324"/>
        <end position="339"/>
    </location>
</feature>
<feature type="compositionally biased region" description="Acidic residues" evidence="5">
    <location>
        <begin position="597"/>
        <end position="619"/>
    </location>
</feature>
<feature type="compositionally biased region" description="Acidic residues" evidence="5">
    <location>
        <begin position="634"/>
        <end position="654"/>
    </location>
</feature>
<feature type="compositionally biased region" description="Acidic residues" evidence="5">
    <location>
        <begin position="662"/>
        <end position="674"/>
    </location>
</feature>
<feature type="compositionally biased region" description="Basic and acidic residues" evidence="5">
    <location>
        <begin position="701"/>
        <end position="726"/>
    </location>
</feature>
<feature type="compositionally biased region" description="Acidic residues" evidence="5">
    <location>
        <begin position="823"/>
        <end position="840"/>
    </location>
</feature>
<feature type="compositionally biased region" description="Basic and acidic residues" evidence="5">
    <location>
        <begin position="841"/>
        <end position="852"/>
    </location>
</feature>
<feature type="compositionally biased region" description="Polar residues" evidence="5">
    <location>
        <begin position="900"/>
        <end position="929"/>
    </location>
</feature>
<feature type="compositionally biased region" description="Acidic residues" evidence="5">
    <location>
        <begin position="994"/>
        <end position="1005"/>
    </location>
</feature>
<feature type="compositionally biased region" description="Acidic residues" evidence="5">
    <location>
        <begin position="1012"/>
        <end position="1036"/>
    </location>
</feature>
<feature type="compositionally biased region" description="Basic and acidic residues" evidence="5">
    <location>
        <begin position="1037"/>
        <end position="1055"/>
    </location>
</feature>
<feature type="binding site" evidence="2">
    <location>
        <begin position="1092"/>
        <end position="1099"/>
    </location>
    <ligand>
        <name>ATP</name>
        <dbReference type="ChEBI" id="CHEBI:30616"/>
    </ligand>
</feature>
<proteinExistence type="inferred from homology"/>
<accession>P0CO18</accession>
<accession>Q55LY7</accession>
<accession>Q5K8T2</accession>
<comment type="function">
    <text evidence="1">Catalytic component of the SWR1 complex which mediates the ATP-dependent exchange of histone H2A for the H2A variant HZT1 leading to transcriptional regulation of selected genes by chromatin remodeling.</text>
</comment>
<comment type="catalytic activity">
    <reaction>
        <text>ATP + H2O = ADP + phosphate + H(+)</text>
        <dbReference type="Rhea" id="RHEA:13065"/>
        <dbReference type="ChEBI" id="CHEBI:15377"/>
        <dbReference type="ChEBI" id="CHEBI:15378"/>
        <dbReference type="ChEBI" id="CHEBI:30616"/>
        <dbReference type="ChEBI" id="CHEBI:43474"/>
        <dbReference type="ChEBI" id="CHEBI:456216"/>
        <dbReference type="EC" id="3.6.4.12"/>
    </reaction>
</comment>
<comment type="subunit">
    <text evidence="1">Component of the SWR1 chromatin-remodeling complex.</text>
</comment>
<comment type="subcellular location">
    <subcellularLocation>
        <location evidence="1">Nucleus</location>
    </subcellularLocation>
</comment>
<comment type="similarity">
    <text evidence="6">Belongs to the SNF2/RAD54 helicase family. SWR1 subfamily.</text>
</comment>
<keyword id="KW-0010">Activator</keyword>
<keyword id="KW-0067">ATP-binding</keyword>
<keyword id="KW-0156">Chromatin regulator</keyword>
<keyword id="KW-0238">DNA-binding</keyword>
<keyword id="KW-0347">Helicase</keyword>
<keyword id="KW-0378">Hydrolase</keyword>
<keyword id="KW-0547">Nucleotide-binding</keyword>
<keyword id="KW-0539">Nucleus</keyword>
<keyword id="KW-1185">Reference proteome</keyword>
<keyword id="KW-0804">Transcription</keyword>
<keyword id="KW-0805">Transcription regulation</keyword>